<reference key="1">
    <citation type="journal article" date="1995" name="J. Biol. Chem.">
        <title>An isoform of the neuronal cyclin-dependent kinase 5 (Cdk5) activator.</title>
        <authorList>
            <person name="Tang D."/>
            <person name="Yeung J."/>
            <person name="Lee K.-Y."/>
            <person name="Matsushita M."/>
            <person name="Matsui H."/>
            <person name="Tomizawa K."/>
            <person name="Hatase O."/>
            <person name="Wang J.H."/>
        </authorList>
    </citation>
    <scope>NUCLEOTIDE SEQUENCE [MRNA]</scope>
    <source>
        <tissue>Hippocampus</tissue>
    </source>
</reference>
<reference key="2">
    <citation type="submission" date="2005-11" db="EMBL/GenBank/DDBJ databases">
        <authorList>
            <consortium name="NIEHS SNPs program"/>
        </authorList>
    </citation>
    <scope>NUCLEOTIDE SEQUENCE [GENOMIC DNA]</scope>
</reference>
<reference key="3">
    <citation type="journal article" date="2005" name="Nature">
        <title>Generation and annotation of the DNA sequences of human chromosomes 2 and 4.</title>
        <authorList>
            <person name="Hillier L.W."/>
            <person name="Graves T.A."/>
            <person name="Fulton R.S."/>
            <person name="Fulton L.A."/>
            <person name="Pepin K.H."/>
            <person name="Minx P."/>
            <person name="Wagner-McPherson C."/>
            <person name="Layman D."/>
            <person name="Wylie K."/>
            <person name="Sekhon M."/>
            <person name="Becker M.C."/>
            <person name="Fewell G.A."/>
            <person name="Delehaunty K.D."/>
            <person name="Miner T.L."/>
            <person name="Nash W.E."/>
            <person name="Kremitzki C."/>
            <person name="Oddy L."/>
            <person name="Du H."/>
            <person name="Sun H."/>
            <person name="Bradshaw-Cordum H."/>
            <person name="Ali J."/>
            <person name="Carter J."/>
            <person name="Cordes M."/>
            <person name="Harris A."/>
            <person name="Isak A."/>
            <person name="van Brunt A."/>
            <person name="Nguyen C."/>
            <person name="Du F."/>
            <person name="Courtney L."/>
            <person name="Kalicki J."/>
            <person name="Ozersky P."/>
            <person name="Abbott S."/>
            <person name="Armstrong J."/>
            <person name="Belter E.A."/>
            <person name="Caruso L."/>
            <person name="Cedroni M."/>
            <person name="Cotton M."/>
            <person name="Davidson T."/>
            <person name="Desai A."/>
            <person name="Elliott G."/>
            <person name="Erb T."/>
            <person name="Fronick C."/>
            <person name="Gaige T."/>
            <person name="Haakenson W."/>
            <person name="Haglund K."/>
            <person name="Holmes A."/>
            <person name="Harkins R."/>
            <person name="Kim K."/>
            <person name="Kruchowski S.S."/>
            <person name="Strong C.M."/>
            <person name="Grewal N."/>
            <person name="Goyea E."/>
            <person name="Hou S."/>
            <person name="Levy A."/>
            <person name="Martinka S."/>
            <person name="Mead K."/>
            <person name="McLellan M.D."/>
            <person name="Meyer R."/>
            <person name="Randall-Maher J."/>
            <person name="Tomlinson C."/>
            <person name="Dauphin-Kohlberg S."/>
            <person name="Kozlowicz-Reilly A."/>
            <person name="Shah N."/>
            <person name="Swearengen-Shahid S."/>
            <person name="Snider J."/>
            <person name="Strong J.T."/>
            <person name="Thompson J."/>
            <person name="Yoakum M."/>
            <person name="Leonard S."/>
            <person name="Pearman C."/>
            <person name="Trani L."/>
            <person name="Radionenko M."/>
            <person name="Waligorski J.E."/>
            <person name="Wang C."/>
            <person name="Rock S.M."/>
            <person name="Tin-Wollam A.-M."/>
            <person name="Maupin R."/>
            <person name="Latreille P."/>
            <person name="Wendl M.C."/>
            <person name="Yang S.-P."/>
            <person name="Pohl C."/>
            <person name="Wallis J.W."/>
            <person name="Spieth J."/>
            <person name="Bieri T.A."/>
            <person name="Berkowicz N."/>
            <person name="Nelson J.O."/>
            <person name="Osborne J."/>
            <person name="Ding L."/>
            <person name="Meyer R."/>
            <person name="Sabo A."/>
            <person name="Shotland Y."/>
            <person name="Sinha P."/>
            <person name="Wohldmann P.E."/>
            <person name="Cook L.L."/>
            <person name="Hickenbotham M.T."/>
            <person name="Eldred J."/>
            <person name="Williams D."/>
            <person name="Jones T.A."/>
            <person name="She X."/>
            <person name="Ciccarelli F.D."/>
            <person name="Izaurralde E."/>
            <person name="Taylor J."/>
            <person name="Schmutz J."/>
            <person name="Myers R.M."/>
            <person name="Cox D.R."/>
            <person name="Huang X."/>
            <person name="McPherson J.D."/>
            <person name="Mardis E.R."/>
            <person name="Clifton S.W."/>
            <person name="Warren W.C."/>
            <person name="Chinwalla A.T."/>
            <person name="Eddy S.R."/>
            <person name="Marra M.A."/>
            <person name="Ovcharenko I."/>
            <person name="Furey T.S."/>
            <person name="Miller W."/>
            <person name="Eichler E.E."/>
            <person name="Bork P."/>
            <person name="Suyama M."/>
            <person name="Torrents D."/>
            <person name="Waterston R.H."/>
            <person name="Wilson R.K."/>
        </authorList>
    </citation>
    <scope>NUCLEOTIDE SEQUENCE [LARGE SCALE GENOMIC DNA]</scope>
</reference>
<reference key="4">
    <citation type="journal article" date="2008" name="J. Neurochem.">
        <title>Myristoylation of p39 and p35 is a determinant of cytoplasmic or nuclear localization of active cyclin-dependent kinase 5 complexes.</title>
        <authorList>
            <person name="Asada A."/>
            <person name="Yamamoto N."/>
            <person name="Gohda M."/>
            <person name="Saito T."/>
            <person name="Hayashi N."/>
            <person name="Hisanaga S."/>
        </authorList>
    </citation>
    <scope>SUBCELLULAR LOCATION</scope>
    <scope>MYRISTOYLATION AT GLY-2</scope>
    <scope>MUTAGENESIS OF GLY-2</scope>
</reference>
<gene>
    <name type="primary">CDK5R2</name>
    <name type="synonym">NCK5AI</name>
</gene>
<keyword id="KW-1003">Cell membrane</keyword>
<keyword id="KW-0446">Lipid-binding</keyword>
<keyword id="KW-0449">Lipoprotein</keyword>
<keyword id="KW-0472">Membrane</keyword>
<keyword id="KW-0519">Myristate</keyword>
<keyword id="KW-0597">Phosphoprotein</keyword>
<keyword id="KW-1267">Proteomics identification</keyword>
<keyword id="KW-1185">Reference proteome</keyword>
<comment type="function">
    <text>Activator of CDK5/TPKII.</text>
</comment>
<comment type="subunit">
    <text>Heterodimer of a catalytic subunit and a regulatory subunit.</text>
</comment>
<comment type="subcellular location">
    <subcellularLocation>
        <location evidence="4">Cell membrane</location>
        <topology evidence="4">Lipid-anchor</topology>
        <orientation evidence="4">Cytoplasmic side</orientation>
    </subcellularLocation>
</comment>
<comment type="tissue specificity">
    <text>Brain and neuron specific.</text>
</comment>
<comment type="PTM">
    <text evidence="4">Myristoylated. The Gly-2-Ala mutant is absent of the cell periphery, suggesting that a proper myristoylation signal is essential for the proper distribution of CDK5R2 (p39).</text>
</comment>
<comment type="similarity">
    <text evidence="5">Belongs to the cyclin-dependent kinase 5 activator family.</text>
</comment>
<proteinExistence type="evidence at protein level"/>
<organism>
    <name type="scientific">Homo sapiens</name>
    <name type="common">Human</name>
    <dbReference type="NCBI Taxonomy" id="9606"/>
    <lineage>
        <taxon>Eukaryota</taxon>
        <taxon>Metazoa</taxon>
        <taxon>Chordata</taxon>
        <taxon>Craniata</taxon>
        <taxon>Vertebrata</taxon>
        <taxon>Euteleostomi</taxon>
        <taxon>Mammalia</taxon>
        <taxon>Eutheria</taxon>
        <taxon>Euarchontoglires</taxon>
        <taxon>Primates</taxon>
        <taxon>Haplorrhini</taxon>
        <taxon>Catarrhini</taxon>
        <taxon>Hominidae</taxon>
        <taxon>Homo</taxon>
    </lineage>
</organism>
<evidence type="ECO:0000250" key="1">
    <source>
        <dbReference type="UniProtKB" id="O35926"/>
    </source>
</evidence>
<evidence type="ECO:0000255" key="2"/>
<evidence type="ECO:0000256" key="3">
    <source>
        <dbReference type="SAM" id="MobiDB-lite"/>
    </source>
</evidence>
<evidence type="ECO:0000269" key="4">
    <source>
    </source>
</evidence>
<evidence type="ECO:0000305" key="5"/>
<dbReference type="EMBL" id="U34051">
    <property type="protein sequence ID" value="AAC50278.1"/>
    <property type="molecule type" value="mRNA"/>
</dbReference>
<dbReference type="EMBL" id="DQ307839">
    <property type="protein sequence ID" value="ABB96255.1"/>
    <property type="molecule type" value="Genomic_DNA"/>
</dbReference>
<dbReference type="EMBL" id="AC097468">
    <property type="protein sequence ID" value="AAX88916.1"/>
    <property type="molecule type" value="Genomic_DNA"/>
</dbReference>
<dbReference type="CCDS" id="CCDS2427.1"/>
<dbReference type="PIR" id="I39172">
    <property type="entry name" value="I39172"/>
</dbReference>
<dbReference type="RefSeq" id="NP_003927.1">
    <property type="nucleotide sequence ID" value="NM_003936.5"/>
</dbReference>
<dbReference type="SMR" id="Q13319"/>
<dbReference type="BioGRID" id="114453">
    <property type="interactions" value="19"/>
</dbReference>
<dbReference type="ComplexPortal" id="CPX-3141">
    <property type="entry name" value="Cyclin-dependent protein kinase 5 holoenzyme complex, p39 variant"/>
</dbReference>
<dbReference type="FunCoup" id="Q13319">
    <property type="interactions" value="6"/>
</dbReference>
<dbReference type="MINT" id="Q13319"/>
<dbReference type="STRING" id="9606.ENSP00000304250"/>
<dbReference type="GlyGen" id="Q13319">
    <property type="glycosylation" value="3 sites, 1 O-linked glycan (2 sites)"/>
</dbReference>
<dbReference type="iPTMnet" id="Q13319"/>
<dbReference type="PhosphoSitePlus" id="Q13319"/>
<dbReference type="BioMuta" id="CDK5R2"/>
<dbReference type="jPOST" id="Q13319"/>
<dbReference type="MassIVE" id="Q13319"/>
<dbReference type="PaxDb" id="9606-ENSP00000304250"/>
<dbReference type="PeptideAtlas" id="Q13319"/>
<dbReference type="ProteomicsDB" id="59306"/>
<dbReference type="Antibodypedia" id="34293">
    <property type="antibodies" value="148 antibodies from 26 providers"/>
</dbReference>
<dbReference type="DNASU" id="8941"/>
<dbReference type="Ensembl" id="ENST00000302625.6">
    <property type="protein sequence ID" value="ENSP00000304250.4"/>
    <property type="gene ID" value="ENSG00000171450.6"/>
</dbReference>
<dbReference type="GeneID" id="8941"/>
<dbReference type="KEGG" id="hsa:8941"/>
<dbReference type="MANE-Select" id="ENST00000302625.6">
    <property type="protein sequence ID" value="ENSP00000304250.4"/>
    <property type="RefSeq nucleotide sequence ID" value="NM_003936.5"/>
    <property type="RefSeq protein sequence ID" value="NP_003927.1"/>
</dbReference>
<dbReference type="UCSC" id="uc002vjf.5">
    <property type="organism name" value="human"/>
</dbReference>
<dbReference type="AGR" id="HGNC:1776"/>
<dbReference type="CTD" id="8941"/>
<dbReference type="DisGeNET" id="8941"/>
<dbReference type="GeneCards" id="CDK5R2"/>
<dbReference type="HGNC" id="HGNC:1776">
    <property type="gene designation" value="CDK5R2"/>
</dbReference>
<dbReference type="HPA" id="ENSG00000171450">
    <property type="expression patterns" value="Group enriched (brain, pituitary gland, retina)"/>
</dbReference>
<dbReference type="MIM" id="603764">
    <property type="type" value="gene"/>
</dbReference>
<dbReference type="neXtProt" id="NX_Q13319"/>
<dbReference type="OpenTargets" id="ENSG00000171450"/>
<dbReference type="PharmGKB" id="PA26312"/>
<dbReference type="VEuPathDB" id="HostDB:ENSG00000171450"/>
<dbReference type="eggNOG" id="KOG3932">
    <property type="taxonomic scope" value="Eukaryota"/>
</dbReference>
<dbReference type="GeneTree" id="ENSGT00390000008812"/>
<dbReference type="HOGENOM" id="CLU_034132_2_1_1"/>
<dbReference type="InParanoid" id="Q13319"/>
<dbReference type="OMA" id="GDFMCRR"/>
<dbReference type="OrthoDB" id="7676799at2759"/>
<dbReference type="PAN-GO" id="Q13319">
    <property type="GO annotations" value="6 GO annotations based on evolutionary models"/>
</dbReference>
<dbReference type="PhylomeDB" id="Q13319"/>
<dbReference type="TreeFam" id="TF101036"/>
<dbReference type="PathwayCommons" id="Q13319"/>
<dbReference type="Reactome" id="R-HSA-9031628">
    <property type="pathway name" value="NGF-stimulated transcription"/>
</dbReference>
<dbReference type="SignaLink" id="Q13319"/>
<dbReference type="BioGRID-ORCS" id="8941">
    <property type="hits" value="9 hits in 1156 CRISPR screens"/>
</dbReference>
<dbReference type="ChiTaRS" id="CDK5R2">
    <property type="organism name" value="human"/>
</dbReference>
<dbReference type="GeneWiki" id="CDK5R2"/>
<dbReference type="GenomeRNAi" id="8941"/>
<dbReference type="Pharos" id="Q13319">
    <property type="development level" value="Tbio"/>
</dbReference>
<dbReference type="PRO" id="PR:Q13319"/>
<dbReference type="Proteomes" id="UP000005640">
    <property type="component" value="Chromosome 2"/>
</dbReference>
<dbReference type="RNAct" id="Q13319">
    <property type="molecule type" value="protein"/>
</dbReference>
<dbReference type="Bgee" id="ENSG00000171450">
    <property type="expression patterns" value="Expressed in prefrontal cortex and 103 other cell types or tissues"/>
</dbReference>
<dbReference type="GO" id="GO:0000307">
    <property type="term" value="C:cyclin-dependent protein kinase holoenzyme complex"/>
    <property type="evidence" value="ECO:0000250"/>
    <property type="project" value="ComplexPortal"/>
</dbReference>
<dbReference type="GO" id="GO:0005737">
    <property type="term" value="C:cytoplasm"/>
    <property type="evidence" value="ECO:0000250"/>
    <property type="project" value="ARUK-UCL"/>
</dbReference>
<dbReference type="GO" id="GO:0030426">
    <property type="term" value="C:growth cone"/>
    <property type="evidence" value="ECO:0000250"/>
    <property type="project" value="ARUK-UCL"/>
</dbReference>
<dbReference type="GO" id="GO:0016020">
    <property type="term" value="C:membrane"/>
    <property type="evidence" value="ECO:0000250"/>
    <property type="project" value="ARUK-UCL"/>
</dbReference>
<dbReference type="GO" id="GO:0043005">
    <property type="term" value="C:neuron projection"/>
    <property type="evidence" value="ECO:0000250"/>
    <property type="project" value="ARUK-UCL"/>
</dbReference>
<dbReference type="GO" id="GO:0005886">
    <property type="term" value="C:plasma membrane"/>
    <property type="evidence" value="ECO:0007669"/>
    <property type="project" value="UniProtKB-SubCell"/>
</dbReference>
<dbReference type="GO" id="GO:0098793">
    <property type="term" value="C:presynapse"/>
    <property type="evidence" value="ECO:0007669"/>
    <property type="project" value="Ensembl"/>
</dbReference>
<dbReference type="GO" id="GO:0016533">
    <property type="term" value="C:protein kinase 5 complex"/>
    <property type="evidence" value="ECO:0000250"/>
    <property type="project" value="ComplexPortal"/>
</dbReference>
<dbReference type="GO" id="GO:0003779">
    <property type="term" value="F:actin binding"/>
    <property type="evidence" value="ECO:0000250"/>
    <property type="project" value="ARUK-UCL"/>
</dbReference>
<dbReference type="GO" id="GO:0061575">
    <property type="term" value="F:cyclin-dependent protein serine/threonine kinase activator activity"/>
    <property type="evidence" value="ECO:0000250"/>
    <property type="project" value="ARUK-UCL"/>
</dbReference>
<dbReference type="GO" id="GO:0008289">
    <property type="term" value="F:lipid binding"/>
    <property type="evidence" value="ECO:0007669"/>
    <property type="project" value="UniProtKB-KW"/>
</dbReference>
<dbReference type="GO" id="GO:0019901">
    <property type="term" value="F:protein kinase binding"/>
    <property type="evidence" value="ECO:0000318"/>
    <property type="project" value="GO_Central"/>
</dbReference>
<dbReference type="GO" id="GO:0007411">
    <property type="term" value="P:axon guidance"/>
    <property type="evidence" value="ECO:0000318"/>
    <property type="project" value="GO_Central"/>
</dbReference>
<dbReference type="GO" id="GO:0007420">
    <property type="term" value="P:brain development"/>
    <property type="evidence" value="ECO:0000318"/>
    <property type="project" value="GO_Central"/>
</dbReference>
<dbReference type="GO" id="GO:0021549">
    <property type="term" value="P:cerebellum development"/>
    <property type="evidence" value="ECO:0007669"/>
    <property type="project" value="Ensembl"/>
</dbReference>
<dbReference type="GO" id="GO:0021766">
    <property type="term" value="P:hippocampus development"/>
    <property type="evidence" value="ECO:0007669"/>
    <property type="project" value="Ensembl"/>
</dbReference>
<dbReference type="GO" id="GO:0021819">
    <property type="term" value="P:layer formation in cerebral cortex"/>
    <property type="evidence" value="ECO:0007669"/>
    <property type="project" value="Ensembl"/>
</dbReference>
<dbReference type="GO" id="GO:0001764">
    <property type="term" value="P:neuron migration"/>
    <property type="evidence" value="ECO:0007669"/>
    <property type="project" value="Ensembl"/>
</dbReference>
<dbReference type="GO" id="GO:0045956">
    <property type="term" value="P:positive regulation of calcium ion-dependent exocytosis"/>
    <property type="evidence" value="ECO:0007669"/>
    <property type="project" value="Ensembl"/>
</dbReference>
<dbReference type="GO" id="GO:0000079">
    <property type="term" value="P:regulation of cyclin-dependent protein serine/threonine kinase activity"/>
    <property type="evidence" value="ECO:0000304"/>
    <property type="project" value="ProtInc"/>
</dbReference>
<dbReference type="GO" id="GO:0051493">
    <property type="term" value="P:regulation of cytoskeleton organization"/>
    <property type="evidence" value="ECO:0007669"/>
    <property type="project" value="Ensembl"/>
</dbReference>
<dbReference type="GO" id="GO:0021722">
    <property type="term" value="P:superior olivary nucleus maturation"/>
    <property type="evidence" value="ECO:0007669"/>
    <property type="project" value="Ensembl"/>
</dbReference>
<dbReference type="FunFam" id="1.10.472.10:FF:000025">
    <property type="entry name" value="Cyclin-dependent kinase 5 activator"/>
    <property type="match status" value="1"/>
</dbReference>
<dbReference type="Gene3D" id="1.10.472.10">
    <property type="entry name" value="Cyclin-like"/>
    <property type="match status" value="1"/>
</dbReference>
<dbReference type="InterPro" id="IPR004944">
    <property type="entry name" value="CDK5_activator"/>
</dbReference>
<dbReference type="InterPro" id="IPR036915">
    <property type="entry name" value="Cyclin-like_sf"/>
</dbReference>
<dbReference type="PANTHER" id="PTHR23401">
    <property type="entry name" value="CYCLIN DEPENDANT KINASE-5 ACTIVATOR"/>
    <property type="match status" value="1"/>
</dbReference>
<dbReference type="PANTHER" id="PTHR23401:SF3">
    <property type="entry name" value="CYCLIN-DEPENDENT KINASE 5 ACTIVATOR 2"/>
    <property type="match status" value="1"/>
</dbReference>
<dbReference type="Pfam" id="PF03261">
    <property type="entry name" value="CDK5_activator"/>
    <property type="match status" value="1"/>
</dbReference>
<dbReference type="PIRSF" id="PIRSF009324">
    <property type="entry name" value="Cdk5_activator"/>
    <property type="match status" value="1"/>
</dbReference>
<dbReference type="SUPFAM" id="SSF47954">
    <property type="entry name" value="Cyclin-like"/>
    <property type="match status" value="1"/>
</dbReference>
<name>CD5R2_HUMAN</name>
<sequence length="367" mass="38705">MGTVLSLSPASSAKGRRPGGLPEEKKKAPPAGDEALGGYGAPPVGKGGKGESRLKRPSVLISALTWKRLVAASAKKKKGSKKVTPKPASTGPDPLVQQRNRENLLRKGRDPPDGGGTAKPLAVPVPTVPAAAATCEPPSGGSAAAQPPGSGGGKPPPPPPPAPQVAPPVPGGSPRRVIVQASTGELLRCLGDFVCRRCYRLKELSPGELVGWFRGVDRSLLLQGWQDQAFITPANLVFVYLLCRESLRGDELASAAELQAAFLTCLYLAYSYMGNEISYPLKPFLVEPDKERFWQRCLRLIQRLSPQMLRLNADPHFFTQVFQDLKNEGEAAASGGGPPSGGAPAASSAARDSCAAGTKHWTMNLDR</sequence>
<accession>Q13319</accession>
<accession>Q4ZFW6</accession>
<feature type="initiator methionine" description="Removed" evidence="4">
    <location>
        <position position="1"/>
    </location>
</feature>
<feature type="propeptide" id="PRO_0000004800" evidence="2">
    <location>
        <begin position="2"/>
        <end status="unknown"/>
    </location>
</feature>
<feature type="chain" id="PRO_0000004801" description="Cyclin-dependent kinase 5 activator 2">
    <location>
        <begin status="unknown"/>
        <end position="367"/>
    </location>
</feature>
<feature type="region of interest" description="Disordered" evidence="3">
    <location>
        <begin position="1"/>
        <end position="56"/>
    </location>
</feature>
<feature type="region of interest" description="Disordered" evidence="3">
    <location>
        <begin position="72"/>
        <end position="98"/>
    </location>
</feature>
<feature type="region of interest" description="Disordered" evidence="3">
    <location>
        <begin position="131"/>
        <end position="175"/>
    </location>
</feature>
<feature type="region of interest" description="Disordered" evidence="3">
    <location>
        <begin position="329"/>
        <end position="367"/>
    </location>
</feature>
<feature type="compositionally biased region" description="Polar residues" evidence="3">
    <location>
        <begin position="1"/>
        <end position="11"/>
    </location>
</feature>
<feature type="compositionally biased region" description="Basic residues" evidence="3">
    <location>
        <begin position="74"/>
        <end position="84"/>
    </location>
</feature>
<feature type="compositionally biased region" description="Low complexity" evidence="3">
    <location>
        <begin position="131"/>
        <end position="148"/>
    </location>
</feature>
<feature type="compositionally biased region" description="Pro residues" evidence="3">
    <location>
        <begin position="154"/>
        <end position="171"/>
    </location>
</feature>
<feature type="compositionally biased region" description="Low complexity" evidence="3">
    <location>
        <begin position="342"/>
        <end position="357"/>
    </location>
</feature>
<feature type="modified residue" description="Phosphothreonine" evidence="1">
    <location>
        <position position="84"/>
    </location>
</feature>
<feature type="lipid moiety-binding region" description="N-myristoyl glycine" evidence="4">
    <location>
        <position position="2"/>
    </location>
</feature>
<feature type="mutagenesis site" description="Absent from the cell periphery." evidence="4">
    <original>G</original>
    <variation>A</variation>
    <location>
        <position position="2"/>
    </location>
</feature>
<protein>
    <recommendedName>
        <fullName>Cyclin-dependent kinase 5 activator 2</fullName>
        <shortName>CDK5 activator 2</shortName>
    </recommendedName>
    <alternativeName>
        <fullName>Cyclin-dependent kinase 5 regulatory subunit 2</fullName>
    </alternativeName>
    <alternativeName>
        <fullName>p39</fullName>
    </alternativeName>
    <alternativeName>
        <fullName>p39I</fullName>
    </alternativeName>
</protein>